<keyword id="KW-1185">Reference proteome</keyword>
<keyword id="KW-0687">Ribonucleoprotein</keyword>
<keyword id="KW-0689">Ribosomal protein</keyword>
<keyword id="KW-0694">RNA-binding</keyword>
<keyword id="KW-0699">rRNA-binding</keyword>
<dbReference type="EMBL" id="BA000022">
    <property type="protein sequence ID" value="BAA17348.1"/>
    <property type="molecule type" value="Genomic_DNA"/>
</dbReference>
<dbReference type="PIR" id="S77501">
    <property type="entry name" value="S77501"/>
</dbReference>
<dbReference type="SMR" id="P73319"/>
<dbReference type="FunCoup" id="P73319">
    <property type="interactions" value="479"/>
</dbReference>
<dbReference type="IntAct" id="P73319">
    <property type="interactions" value="7"/>
</dbReference>
<dbReference type="STRING" id="1148.gene:10498211"/>
<dbReference type="PaxDb" id="1148-1652426"/>
<dbReference type="EnsemblBacteria" id="BAA17348">
    <property type="protein sequence ID" value="BAA17348"/>
    <property type="gene ID" value="BAA17348"/>
</dbReference>
<dbReference type="KEGG" id="syn:sll1800"/>
<dbReference type="eggNOG" id="COG0088">
    <property type="taxonomic scope" value="Bacteria"/>
</dbReference>
<dbReference type="InParanoid" id="P73319"/>
<dbReference type="PhylomeDB" id="P73319"/>
<dbReference type="Proteomes" id="UP000001425">
    <property type="component" value="Chromosome"/>
</dbReference>
<dbReference type="GO" id="GO:1990904">
    <property type="term" value="C:ribonucleoprotein complex"/>
    <property type="evidence" value="ECO:0007669"/>
    <property type="project" value="UniProtKB-KW"/>
</dbReference>
<dbReference type="GO" id="GO:0005840">
    <property type="term" value="C:ribosome"/>
    <property type="evidence" value="ECO:0007669"/>
    <property type="project" value="UniProtKB-KW"/>
</dbReference>
<dbReference type="GO" id="GO:0019843">
    <property type="term" value="F:rRNA binding"/>
    <property type="evidence" value="ECO:0007669"/>
    <property type="project" value="UniProtKB-UniRule"/>
</dbReference>
<dbReference type="GO" id="GO:0003735">
    <property type="term" value="F:structural constituent of ribosome"/>
    <property type="evidence" value="ECO:0000318"/>
    <property type="project" value="GO_Central"/>
</dbReference>
<dbReference type="GO" id="GO:0006412">
    <property type="term" value="P:translation"/>
    <property type="evidence" value="ECO:0007669"/>
    <property type="project" value="UniProtKB-UniRule"/>
</dbReference>
<dbReference type="FunFam" id="3.40.1370.10:FF:000012">
    <property type="entry name" value="50S ribosomal protein L4"/>
    <property type="match status" value="1"/>
</dbReference>
<dbReference type="Gene3D" id="3.40.1370.10">
    <property type="match status" value="1"/>
</dbReference>
<dbReference type="HAMAP" id="MF_01328_B">
    <property type="entry name" value="Ribosomal_uL4_B"/>
    <property type="match status" value="1"/>
</dbReference>
<dbReference type="InterPro" id="IPR002136">
    <property type="entry name" value="Ribosomal_uL4"/>
</dbReference>
<dbReference type="InterPro" id="IPR013005">
    <property type="entry name" value="Ribosomal_uL4-like"/>
</dbReference>
<dbReference type="InterPro" id="IPR023574">
    <property type="entry name" value="Ribosomal_uL4_dom_sf"/>
</dbReference>
<dbReference type="NCBIfam" id="TIGR03953">
    <property type="entry name" value="rplD_bact"/>
    <property type="match status" value="1"/>
</dbReference>
<dbReference type="PANTHER" id="PTHR10746">
    <property type="entry name" value="50S RIBOSOMAL PROTEIN L4"/>
    <property type="match status" value="1"/>
</dbReference>
<dbReference type="PANTHER" id="PTHR10746:SF17">
    <property type="entry name" value="LARGE RIBOSOMAL SUBUNIT PROTEIN UL4C"/>
    <property type="match status" value="1"/>
</dbReference>
<dbReference type="Pfam" id="PF00573">
    <property type="entry name" value="Ribosomal_L4"/>
    <property type="match status" value="1"/>
</dbReference>
<dbReference type="SUPFAM" id="SSF52166">
    <property type="entry name" value="Ribosomal protein L4"/>
    <property type="match status" value="1"/>
</dbReference>
<reference key="1">
    <citation type="journal article" date="1996" name="DNA Res.">
        <title>Sequence analysis of the genome of the unicellular cyanobacterium Synechocystis sp. strain PCC6803. II. Sequence determination of the entire genome and assignment of potential protein-coding regions.</title>
        <authorList>
            <person name="Kaneko T."/>
            <person name="Sato S."/>
            <person name="Kotani H."/>
            <person name="Tanaka A."/>
            <person name="Asamizu E."/>
            <person name="Nakamura Y."/>
            <person name="Miyajima N."/>
            <person name="Hirosawa M."/>
            <person name="Sugiura M."/>
            <person name="Sasamoto S."/>
            <person name="Kimura T."/>
            <person name="Hosouchi T."/>
            <person name="Matsuno A."/>
            <person name="Muraki A."/>
            <person name="Nakazaki N."/>
            <person name="Naruo K."/>
            <person name="Okumura S."/>
            <person name="Shimpo S."/>
            <person name="Takeuchi C."/>
            <person name="Wada T."/>
            <person name="Watanabe A."/>
            <person name="Yamada M."/>
            <person name="Yasuda M."/>
            <person name="Tabata S."/>
        </authorList>
    </citation>
    <scope>NUCLEOTIDE SEQUENCE [LARGE SCALE GENOMIC DNA]</scope>
    <source>
        <strain>ATCC 27184 / PCC 6803 / Kazusa</strain>
    </source>
</reference>
<feature type="chain" id="PRO_0000129298" description="Large ribosomal subunit protein uL4">
    <location>
        <begin position="1"/>
        <end position="210"/>
    </location>
</feature>
<feature type="region of interest" description="Disordered" evidence="2">
    <location>
        <begin position="41"/>
        <end position="77"/>
    </location>
</feature>
<feature type="compositionally biased region" description="Polar residues" evidence="2">
    <location>
        <begin position="41"/>
        <end position="51"/>
    </location>
</feature>
<feature type="compositionally biased region" description="Basic residues" evidence="2">
    <location>
        <begin position="60"/>
        <end position="71"/>
    </location>
</feature>
<proteinExistence type="inferred from homology"/>
<organism>
    <name type="scientific">Synechocystis sp. (strain ATCC 27184 / PCC 6803 / Kazusa)</name>
    <dbReference type="NCBI Taxonomy" id="1111708"/>
    <lineage>
        <taxon>Bacteria</taxon>
        <taxon>Bacillati</taxon>
        <taxon>Cyanobacteriota</taxon>
        <taxon>Cyanophyceae</taxon>
        <taxon>Synechococcales</taxon>
        <taxon>Merismopediaceae</taxon>
        <taxon>Synechocystis</taxon>
    </lineage>
</organism>
<accession>P73319</accession>
<protein>
    <recommendedName>
        <fullName evidence="1">Large ribosomal subunit protein uL4</fullName>
    </recommendedName>
    <alternativeName>
        <fullName evidence="3">50S ribosomal protein L4</fullName>
    </alternativeName>
</protein>
<name>RL4_SYNY3</name>
<evidence type="ECO:0000255" key="1">
    <source>
        <dbReference type="HAMAP-Rule" id="MF_01328"/>
    </source>
</evidence>
<evidence type="ECO:0000256" key="2">
    <source>
        <dbReference type="SAM" id="MobiDB-lite"/>
    </source>
</evidence>
<evidence type="ECO:0000305" key="3"/>
<comment type="function">
    <text evidence="1">One of the primary rRNA binding proteins, this protein initially binds near the 5'-end of the 23S rRNA. It is important during the early stages of 50S assembly. It makes multiple contacts with different domains of the 23S rRNA in the assembled 50S subunit and ribosome.</text>
</comment>
<comment type="function">
    <text evidence="1">Forms part of the polypeptide exit tunnel.</text>
</comment>
<comment type="subunit">
    <text evidence="1">Part of the 50S ribosomal subunit.</text>
</comment>
<comment type="similarity">
    <text evidence="1">Belongs to the universal ribosomal protein uL4 family.</text>
</comment>
<gene>
    <name evidence="1" type="primary">rplD</name>
    <name evidence="1" type="synonym">rpl4</name>
    <name type="ordered locus">sll1800</name>
</gene>
<sequence length="210" mass="23356">MVDCIVKNWQGEEVGNASLTLRVAKEENAAHIVHRALVRQQNNARQGNASAKTRAEVRGGGRKPWKQKGTGRARAGSIRSPLWRGGGVIFGPKPRDYSQKMNRKERRLALRTAIASRADNMVVVEAFGDQFSQPKTKELATALTRWGAKPEKRVLLILDEIPENVFLSGRNIPYLKILRADNLNIYDVLVADTIVATATALEKIQEVYGE</sequence>